<feature type="chain" id="PRO_0000332848" description="Cysteine--tRNA ligase">
    <location>
        <begin position="1"/>
        <end position="461"/>
    </location>
</feature>
<feature type="short sequence motif" description="'HIGH' region">
    <location>
        <begin position="32"/>
        <end position="42"/>
    </location>
</feature>
<feature type="short sequence motif" description="'KMSKS' region">
    <location>
        <begin position="270"/>
        <end position="274"/>
    </location>
</feature>
<feature type="binding site" evidence="1">
    <location>
        <position position="30"/>
    </location>
    <ligand>
        <name>Zn(2+)</name>
        <dbReference type="ChEBI" id="CHEBI:29105"/>
    </ligand>
</feature>
<feature type="binding site" evidence="1">
    <location>
        <position position="212"/>
    </location>
    <ligand>
        <name>Zn(2+)</name>
        <dbReference type="ChEBI" id="CHEBI:29105"/>
    </ligand>
</feature>
<feature type="binding site" evidence="1">
    <location>
        <position position="237"/>
    </location>
    <ligand>
        <name>Zn(2+)</name>
        <dbReference type="ChEBI" id="CHEBI:29105"/>
    </ligand>
</feature>
<feature type="binding site" evidence="1">
    <location>
        <position position="241"/>
    </location>
    <ligand>
        <name>Zn(2+)</name>
        <dbReference type="ChEBI" id="CHEBI:29105"/>
    </ligand>
</feature>
<feature type="binding site" evidence="1">
    <location>
        <position position="273"/>
    </location>
    <ligand>
        <name>ATP</name>
        <dbReference type="ChEBI" id="CHEBI:30616"/>
    </ligand>
</feature>
<organism>
    <name type="scientific">Maricaulis maris (strain MCS10)</name>
    <name type="common">Caulobacter maris</name>
    <dbReference type="NCBI Taxonomy" id="394221"/>
    <lineage>
        <taxon>Bacteria</taxon>
        <taxon>Pseudomonadati</taxon>
        <taxon>Pseudomonadota</taxon>
        <taxon>Alphaproteobacteria</taxon>
        <taxon>Maricaulales</taxon>
        <taxon>Maricaulaceae</taxon>
        <taxon>Maricaulis</taxon>
    </lineage>
</organism>
<name>SYC_MARMM</name>
<proteinExistence type="inferred from homology"/>
<comment type="catalytic activity">
    <reaction evidence="1">
        <text>tRNA(Cys) + L-cysteine + ATP = L-cysteinyl-tRNA(Cys) + AMP + diphosphate</text>
        <dbReference type="Rhea" id="RHEA:17773"/>
        <dbReference type="Rhea" id="RHEA-COMP:9661"/>
        <dbReference type="Rhea" id="RHEA-COMP:9679"/>
        <dbReference type="ChEBI" id="CHEBI:30616"/>
        <dbReference type="ChEBI" id="CHEBI:33019"/>
        <dbReference type="ChEBI" id="CHEBI:35235"/>
        <dbReference type="ChEBI" id="CHEBI:78442"/>
        <dbReference type="ChEBI" id="CHEBI:78517"/>
        <dbReference type="ChEBI" id="CHEBI:456215"/>
        <dbReference type="EC" id="6.1.1.16"/>
    </reaction>
</comment>
<comment type="cofactor">
    <cofactor evidence="1">
        <name>Zn(2+)</name>
        <dbReference type="ChEBI" id="CHEBI:29105"/>
    </cofactor>
    <text evidence="1">Binds 1 zinc ion per subunit.</text>
</comment>
<comment type="subunit">
    <text evidence="1">Monomer.</text>
</comment>
<comment type="subcellular location">
    <subcellularLocation>
        <location evidence="1">Cytoplasm</location>
    </subcellularLocation>
</comment>
<comment type="similarity">
    <text evidence="1">Belongs to the class-I aminoacyl-tRNA synthetase family.</text>
</comment>
<protein>
    <recommendedName>
        <fullName evidence="1">Cysteine--tRNA ligase</fullName>
        <ecNumber evidence="1">6.1.1.16</ecNumber>
    </recommendedName>
    <alternativeName>
        <fullName evidence="1">Cysteinyl-tRNA synthetase</fullName>
        <shortName evidence="1">CysRS</shortName>
    </alternativeName>
</protein>
<keyword id="KW-0030">Aminoacyl-tRNA synthetase</keyword>
<keyword id="KW-0067">ATP-binding</keyword>
<keyword id="KW-0963">Cytoplasm</keyword>
<keyword id="KW-0436">Ligase</keyword>
<keyword id="KW-0479">Metal-binding</keyword>
<keyword id="KW-0547">Nucleotide-binding</keyword>
<keyword id="KW-0648">Protein biosynthesis</keyword>
<keyword id="KW-1185">Reference proteome</keyword>
<keyword id="KW-0862">Zinc</keyword>
<sequence>MTSLTLFDTMARRKRDFEPTDPGRVTMYVCGPTVYSYAHIGNARPAVVFDTLFRVLRRLYGEDQVIYARNITDVDDKIIETARESGKPIEDITSHYADIYRADMGALGVTLPTIEPHATDHIPEMIGMVQNLVYSGHAYEADGHVLFDVSSYEKYGRLSNRDLDDMIAGARVEVASYKRSPADFVLWKPAKDDEPGWDSPWGRGRPGWHLECSAMSEKHLGKTIDIHGGGTDLVFPHHENEIAQSVCAHKGAPMANYWLHNGFLTMGTDKMSKSLGNVQLVHDLIKDYPGEVLRYALLTAHYRAPLTWTADLLAKTRRSLDRIYGVLRRLGEIEAAPSDVPPAFLEALHDDLNTPKALSELFQLAGNANKALSDVEKAQAKGELLAAAGMLGLGQADPDAWFGLTDLDPAERARIDDLIVRRQTAREEKDWPTADAVRDELNALKVQVDDGPEGSTWRKLD</sequence>
<evidence type="ECO:0000255" key="1">
    <source>
        <dbReference type="HAMAP-Rule" id="MF_00041"/>
    </source>
</evidence>
<accession>Q0AM03</accession>
<dbReference type="EC" id="6.1.1.16" evidence="1"/>
<dbReference type="EMBL" id="CP000449">
    <property type="protein sequence ID" value="ABI66690.1"/>
    <property type="molecule type" value="Genomic_DNA"/>
</dbReference>
<dbReference type="RefSeq" id="WP_011644335.1">
    <property type="nucleotide sequence ID" value="NC_008347.1"/>
</dbReference>
<dbReference type="SMR" id="Q0AM03"/>
<dbReference type="STRING" id="394221.Mmar10_2398"/>
<dbReference type="KEGG" id="mmr:Mmar10_2398"/>
<dbReference type="eggNOG" id="COG0215">
    <property type="taxonomic scope" value="Bacteria"/>
</dbReference>
<dbReference type="HOGENOM" id="CLU_013528_0_1_5"/>
<dbReference type="OrthoDB" id="9815130at2"/>
<dbReference type="Proteomes" id="UP000001964">
    <property type="component" value="Chromosome"/>
</dbReference>
<dbReference type="GO" id="GO:0005829">
    <property type="term" value="C:cytosol"/>
    <property type="evidence" value="ECO:0007669"/>
    <property type="project" value="TreeGrafter"/>
</dbReference>
<dbReference type="GO" id="GO:0005524">
    <property type="term" value="F:ATP binding"/>
    <property type="evidence" value="ECO:0007669"/>
    <property type="project" value="UniProtKB-UniRule"/>
</dbReference>
<dbReference type="GO" id="GO:0004817">
    <property type="term" value="F:cysteine-tRNA ligase activity"/>
    <property type="evidence" value="ECO:0007669"/>
    <property type="project" value="UniProtKB-UniRule"/>
</dbReference>
<dbReference type="GO" id="GO:0008270">
    <property type="term" value="F:zinc ion binding"/>
    <property type="evidence" value="ECO:0007669"/>
    <property type="project" value="UniProtKB-UniRule"/>
</dbReference>
<dbReference type="GO" id="GO:0006423">
    <property type="term" value="P:cysteinyl-tRNA aminoacylation"/>
    <property type="evidence" value="ECO:0007669"/>
    <property type="project" value="UniProtKB-UniRule"/>
</dbReference>
<dbReference type="CDD" id="cd00672">
    <property type="entry name" value="CysRS_core"/>
    <property type="match status" value="1"/>
</dbReference>
<dbReference type="FunFam" id="3.40.50.620:FF:000068">
    <property type="entry name" value="Cysteine--tRNA ligase"/>
    <property type="match status" value="1"/>
</dbReference>
<dbReference type="Gene3D" id="1.20.120.1910">
    <property type="entry name" value="Cysteine-tRNA ligase, C-terminal anti-codon recognition domain"/>
    <property type="match status" value="1"/>
</dbReference>
<dbReference type="Gene3D" id="3.40.50.620">
    <property type="entry name" value="HUPs"/>
    <property type="match status" value="1"/>
</dbReference>
<dbReference type="HAMAP" id="MF_00041">
    <property type="entry name" value="Cys_tRNA_synth"/>
    <property type="match status" value="1"/>
</dbReference>
<dbReference type="InterPro" id="IPR015803">
    <property type="entry name" value="Cys-tRNA-ligase"/>
</dbReference>
<dbReference type="InterPro" id="IPR015273">
    <property type="entry name" value="Cys-tRNA-synt_Ia_DALR"/>
</dbReference>
<dbReference type="InterPro" id="IPR024909">
    <property type="entry name" value="Cys-tRNA/MSH_ligase"/>
</dbReference>
<dbReference type="InterPro" id="IPR056411">
    <property type="entry name" value="CysS_C"/>
</dbReference>
<dbReference type="InterPro" id="IPR014729">
    <property type="entry name" value="Rossmann-like_a/b/a_fold"/>
</dbReference>
<dbReference type="InterPro" id="IPR032678">
    <property type="entry name" value="tRNA-synt_1_cat_dom"/>
</dbReference>
<dbReference type="InterPro" id="IPR009080">
    <property type="entry name" value="tRNAsynth_Ia_anticodon-bd"/>
</dbReference>
<dbReference type="NCBIfam" id="TIGR00435">
    <property type="entry name" value="cysS"/>
    <property type="match status" value="1"/>
</dbReference>
<dbReference type="PANTHER" id="PTHR10890:SF3">
    <property type="entry name" value="CYSTEINE--TRNA LIGASE, CYTOPLASMIC"/>
    <property type="match status" value="1"/>
</dbReference>
<dbReference type="PANTHER" id="PTHR10890">
    <property type="entry name" value="CYSTEINYL-TRNA SYNTHETASE"/>
    <property type="match status" value="1"/>
</dbReference>
<dbReference type="Pfam" id="PF23493">
    <property type="entry name" value="CysS_C"/>
    <property type="match status" value="1"/>
</dbReference>
<dbReference type="Pfam" id="PF09190">
    <property type="entry name" value="DALR_2"/>
    <property type="match status" value="1"/>
</dbReference>
<dbReference type="Pfam" id="PF01406">
    <property type="entry name" value="tRNA-synt_1e"/>
    <property type="match status" value="1"/>
</dbReference>
<dbReference type="PRINTS" id="PR00983">
    <property type="entry name" value="TRNASYNTHCYS"/>
</dbReference>
<dbReference type="SMART" id="SM00840">
    <property type="entry name" value="DALR_2"/>
    <property type="match status" value="1"/>
</dbReference>
<dbReference type="SUPFAM" id="SSF47323">
    <property type="entry name" value="Anticodon-binding domain of a subclass of class I aminoacyl-tRNA synthetases"/>
    <property type="match status" value="1"/>
</dbReference>
<dbReference type="SUPFAM" id="SSF52374">
    <property type="entry name" value="Nucleotidylyl transferase"/>
    <property type="match status" value="1"/>
</dbReference>
<gene>
    <name evidence="1" type="primary">cysS</name>
    <name type="ordered locus">Mmar10_2398</name>
</gene>
<reference key="1">
    <citation type="submission" date="2006-08" db="EMBL/GenBank/DDBJ databases">
        <title>Complete sequence of Maricaulis maris MCS10.</title>
        <authorList>
            <consortium name="US DOE Joint Genome Institute"/>
            <person name="Copeland A."/>
            <person name="Lucas S."/>
            <person name="Lapidus A."/>
            <person name="Barry K."/>
            <person name="Detter J.C."/>
            <person name="Glavina del Rio T."/>
            <person name="Hammon N."/>
            <person name="Israni S."/>
            <person name="Dalin E."/>
            <person name="Tice H."/>
            <person name="Pitluck S."/>
            <person name="Saunders E."/>
            <person name="Brettin T."/>
            <person name="Bruce D."/>
            <person name="Han C."/>
            <person name="Tapia R."/>
            <person name="Gilna P."/>
            <person name="Schmutz J."/>
            <person name="Larimer F."/>
            <person name="Land M."/>
            <person name="Hauser L."/>
            <person name="Kyrpides N."/>
            <person name="Mikhailova N."/>
            <person name="Viollier P."/>
            <person name="Stephens C."/>
            <person name="Richardson P."/>
        </authorList>
    </citation>
    <scope>NUCLEOTIDE SEQUENCE [LARGE SCALE GENOMIC DNA]</scope>
    <source>
        <strain>MCS10</strain>
    </source>
</reference>